<comment type="function">
    <text evidence="2">Plays a role in pre-mRNA splicing as a core component of the spliceosomal U1, U2, U4 and U5 small nuclear ribonucleoproteins (snRNPs), the building blocks of the spliceosome. Component of both the pre-catalytic spliceosome B complex and activated spliceosome C complexes. As a component of the minor spliceosome, involved in the splicing of U12-type introns in pre-mRNAs. May act as a charged protein scaffold to promote snRNP assembly or strengthen snRNP-snRNP interactions through non-specific electrostatic contacts with RNA.</text>
</comment>
<comment type="subunit">
    <text evidence="2">Core component of the spliceosomal U1, U2, U4 and U5 small nuclear ribonucleoproteins (snRNPs), the building blocks of the spliceosome. Most spliceosomal snRNPs contain a common set of Sm proteins, SNRPB, SNRPD1, SNRPD2, SNRPD3, SNRPE, SNRPF and SNRPG that assemble in a heptameric protein ring on the Sm site of the small nuclear RNA to form the core snRNP. Component of the U1 snRNP. The U1 snRNP is composed of the U1 snRNA and the 7 core Sm proteins SNRPB, SNRPD1, SNRPD2, SNRPD3, SNRPE, SNRPF and SNRPG, and at least three U1 snRNP-specific proteins SNRNP70/U1-70K, SNRPA/U1-A and SNRPC/U1-C. Component of the U4/U6-U5 tri-snRNP complex composed of the U4, U6 and U5 snRNAs and at least PRPF3, PRPF4, PRPF6, PRPF8, PRPF31, SNRNP200, TXNL4A, SNRNP40, SNRPB, SNRPD1, SNRPD2, SNRPD3, SNRPE, SNRPF, SNRPG, DDX23, CD2BP2, PPIH, SNU13, EFTUD2, SART1 and USP39, plus LSM2, LSM3, LSM4, LSM5, LSM6, LSM7 and LSM8. Component of the minor spliceosome, which splices U12-type introns. Part of the SMN-Sm complex that contains SMN1, GEMIN2/SIP1, DDX20/GEMIN3, GEMIN4, GEMIN5, GEMIN6, GEMIN7, GEMIN8, STRAP/UNRIP and the Sm proteins SNRPB, SNRPD1, SNRPD2, SNRPD3, SNRPE, SNRPF and SNRPG; catalyzes core snRNPs assembly. Forms a 6S pICln-Sm complex composed of CLNS1A/pICln, SNRPD1, SNRPD2, SNRPE, SNRPF and SNRPG; ring-like structure where CLNS1A/pICln mimics additional Sm proteins and which is unable to assemble into the core snRNP. Interacts (via C-terminus) with SMN1 (via Tudor domain); the interaction is direct. Interacts with GEMIN2; the interaction is direct. Interacts with SNRPD2; the interaction is direct.</text>
</comment>
<comment type="subcellular location">
    <subcellularLocation>
        <location evidence="2">Cytoplasm</location>
        <location evidence="2">Cytosol</location>
    </subcellularLocation>
    <subcellularLocation>
        <location evidence="2">Nucleus</location>
    </subcellularLocation>
    <text evidence="2">SMN-mediated assembly into core snRNPs occurs in the cytosol before SMN-mediated transport to the nucleus to be included in spliceosomes.</text>
</comment>
<comment type="PTM">
    <text evidence="2">Methylated on arginine residues by PRMT5 and PRMT7; probable asymmetric dimethylation which is required for assembly and biogenesis of snRNPs.</text>
</comment>
<comment type="similarity">
    <text evidence="5">Belongs to the snRNP core protein family.</text>
</comment>
<proteinExistence type="inferred from homology"/>
<keyword id="KW-0963">Cytoplasm</keyword>
<keyword id="KW-1017">Isopeptide bond</keyword>
<keyword id="KW-0488">Methylation</keyword>
<keyword id="KW-0507">mRNA processing</keyword>
<keyword id="KW-0508">mRNA splicing</keyword>
<keyword id="KW-0539">Nucleus</keyword>
<keyword id="KW-1185">Reference proteome</keyword>
<keyword id="KW-0677">Repeat</keyword>
<keyword id="KW-0687">Ribonucleoprotein</keyword>
<keyword id="KW-0747">Spliceosome</keyword>
<keyword id="KW-0832">Ubl conjugation</keyword>
<dbReference type="EMBL" id="BC102987">
    <property type="protein sequence ID" value="AAI02988.1"/>
    <property type="molecule type" value="mRNA"/>
</dbReference>
<dbReference type="RefSeq" id="NP_001030237.1">
    <property type="nucleotide sequence ID" value="NM_001035065.2"/>
</dbReference>
<dbReference type="SMR" id="Q3ZC10"/>
<dbReference type="FunCoup" id="Q3ZC10">
    <property type="interactions" value="3682"/>
</dbReference>
<dbReference type="STRING" id="9913.ENSBTAP00000010912"/>
<dbReference type="PaxDb" id="9913-ENSBTAP00000010912"/>
<dbReference type="PeptideAtlas" id="Q3ZC10"/>
<dbReference type="Ensembl" id="ENSBTAT00000010912.5">
    <property type="protein sequence ID" value="ENSBTAP00000010912.4"/>
    <property type="gene ID" value="ENSBTAG00000008292.6"/>
</dbReference>
<dbReference type="GeneID" id="508788"/>
<dbReference type="KEGG" id="bta:508788"/>
<dbReference type="CTD" id="6632"/>
<dbReference type="VEuPathDB" id="HostDB:ENSBTAG00000008292"/>
<dbReference type="eggNOG" id="KOG3428">
    <property type="taxonomic scope" value="Eukaryota"/>
</dbReference>
<dbReference type="GeneTree" id="ENSGT00510000047245"/>
<dbReference type="HOGENOM" id="CLU_123956_3_0_1"/>
<dbReference type="InParanoid" id="Q3ZC10"/>
<dbReference type="OMA" id="TFLMKLT"/>
<dbReference type="OrthoDB" id="10434488at2759"/>
<dbReference type="TreeFam" id="TF314224"/>
<dbReference type="Reactome" id="R-BTA-191859">
    <property type="pathway name" value="snRNP Assembly"/>
</dbReference>
<dbReference type="Reactome" id="R-BTA-72163">
    <property type="pathway name" value="mRNA Splicing - Major Pathway"/>
</dbReference>
<dbReference type="Reactome" id="R-BTA-72165">
    <property type="pathway name" value="mRNA Splicing - Minor Pathway"/>
</dbReference>
<dbReference type="Proteomes" id="UP000009136">
    <property type="component" value="Chromosome 24"/>
</dbReference>
<dbReference type="Bgee" id="ENSBTAG00000008292">
    <property type="expression patterns" value="Expressed in oocyte and 103 other cell types or tissues"/>
</dbReference>
<dbReference type="GO" id="GO:0071013">
    <property type="term" value="C:catalytic step 2 spliceosome"/>
    <property type="evidence" value="ECO:0000318"/>
    <property type="project" value="GO_Central"/>
</dbReference>
<dbReference type="GO" id="GO:0000243">
    <property type="term" value="C:commitment complex"/>
    <property type="evidence" value="ECO:0000318"/>
    <property type="project" value="GO_Central"/>
</dbReference>
<dbReference type="GO" id="GO:0005829">
    <property type="term" value="C:cytosol"/>
    <property type="evidence" value="ECO:0000250"/>
    <property type="project" value="UniProtKB"/>
</dbReference>
<dbReference type="GO" id="GO:0034709">
    <property type="term" value="C:methylosome"/>
    <property type="evidence" value="ECO:0000250"/>
    <property type="project" value="UniProtKB"/>
</dbReference>
<dbReference type="GO" id="GO:0005634">
    <property type="term" value="C:nucleus"/>
    <property type="evidence" value="ECO:0000250"/>
    <property type="project" value="UniProtKB"/>
</dbReference>
<dbReference type="GO" id="GO:0034715">
    <property type="term" value="C:pICln-Sm protein complex"/>
    <property type="evidence" value="ECO:0000250"/>
    <property type="project" value="UniProtKB"/>
</dbReference>
<dbReference type="GO" id="GO:0071011">
    <property type="term" value="C:precatalytic spliceosome"/>
    <property type="evidence" value="ECO:0000318"/>
    <property type="project" value="GO_Central"/>
</dbReference>
<dbReference type="GO" id="GO:0034719">
    <property type="term" value="C:SMN-Sm protein complex"/>
    <property type="evidence" value="ECO:0000250"/>
    <property type="project" value="UniProtKB"/>
</dbReference>
<dbReference type="GO" id="GO:0097526">
    <property type="term" value="C:spliceosomal tri-snRNP complex"/>
    <property type="evidence" value="ECO:0000318"/>
    <property type="project" value="GO_Central"/>
</dbReference>
<dbReference type="GO" id="GO:0005685">
    <property type="term" value="C:U1 snRNP"/>
    <property type="evidence" value="ECO:0000250"/>
    <property type="project" value="UniProtKB"/>
</dbReference>
<dbReference type="GO" id="GO:0005686">
    <property type="term" value="C:U2 snRNP"/>
    <property type="evidence" value="ECO:0000318"/>
    <property type="project" value="GO_Central"/>
</dbReference>
<dbReference type="GO" id="GO:0071007">
    <property type="term" value="C:U2-type catalytic step 2 spliceosome"/>
    <property type="evidence" value="ECO:0000250"/>
    <property type="project" value="UniProtKB"/>
</dbReference>
<dbReference type="GO" id="GO:0071005">
    <property type="term" value="C:U2-type precatalytic spliceosome"/>
    <property type="evidence" value="ECO:0000250"/>
    <property type="project" value="UniProtKB"/>
</dbReference>
<dbReference type="GO" id="GO:0005684">
    <property type="term" value="C:U2-type spliceosomal complex"/>
    <property type="evidence" value="ECO:0000250"/>
    <property type="project" value="UniProtKB"/>
</dbReference>
<dbReference type="GO" id="GO:0005687">
    <property type="term" value="C:U4 snRNP"/>
    <property type="evidence" value="ECO:0000250"/>
    <property type="project" value="UniProtKB"/>
</dbReference>
<dbReference type="GO" id="GO:0046540">
    <property type="term" value="C:U4/U6 x U5 tri-snRNP complex"/>
    <property type="evidence" value="ECO:0000250"/>
    <property type="project" value="UniProtKB"/>
</dbReference>
<dbReference type="GO" id="GO:0005682">
    <property type="term" value="C:U5 snRNP"/>
    <property type="evidence" value="ECO:0000318"/>
    <property type="project" value="GO_Central"/>
</dbReference>
<dbReference type="GO" id="GO:0003723">
    <property type="term" value="F:RNA binding"/>
    <property type="evidence" value="ECO:0000318"/>
    <property type="project" value="GO_Central"/>
</dbReference>
<dbReference type="GO" id="GO:0000398">
    <property type="term" value="P:mRNA splicing, via spliceosome"/>
    <property type="evidence" value="ECO:0000250"/>
    <property type="project" value="UniProtKB"/>
</dbReference>
<dbReference type="GO" id="GO:0000387">
    <property type="term" value="P:spliceosomal snRNP assembly"/>
    <property type="evidence" value="ECO:0000250"/>
    <property type="project" value="UniProtKB"/>
</dbReference>
<dbReference type="CDD" id="cd01724">
    <property type="entry name" value="Sm_D1"/>
    <property type="match status" value="1"/>
</dbReference>
<dbReference type="FunFam" id="2.30.30.100:FF:000016">
    <property type="entry name" value="Small nuclear ribonucleoprotein Sm D1"/>
    <property type="match status" value="1"/>
</dbReference>
<dbReference type="Gene3D" id="2.30.30.100">
    <property type="match status" value="2"/>
</dbReference>
<dbReference type="InterPro" id="IPR027141">
    <property type="entry name" value="LSm4/Sm_D1/D3"/>
</dbReference>
<dbReference type="InterPro" id="IPR010920">
    <property type="entry name" value="LSM_dom_sf"/>
</dbReference>
<dbReference type="InterPro" id="IPR047575">
    <property type="entry name" value="Sm"/>
</dbReference>
<dbReference type="InterPro" id="IPR034102">
    <property type="entry name" value="Sm_D1"/>
</dbReference>
<dbReference type="InterPro" id="IPR001163">
    <property type="entry name" value="Sm_dom_euk/arc"/>
</dbReference>
<dbReference type="PANTHER" id="PTHR23338">
    <property type="entry name" value="SMALL NUCLEAR RIBONUCLEOPROTEIN SM"/>
    <property type="match status" value="1"/>
</dbReference>
<dbReference type="Pfam" id="PF01423">
    <property type="entry name" value="LSM"/>
    <property type="match status" value="1"/>
</dbReference>
<dbReference type="SMART" id="SM00651">
    <property type="entry name" value="Sm"/>
    <property type="match status" value="1"/>
</dbReference>
<dbReference type="SUPFAM" id="SSF50182">
    <property type="entry name" value="Sm-like ribonucleoproteins"/>
    <property type="match status" value="1"/>
</dbReference>
<dbReference type="PROSITE" id="PS52002">
    <property type="entry name" value="SM"/>
    <property type="match status" value="1"/>
</dbReference>
<reference key="1">
    <citation type="submission" date="2005-08" db="EMBL/GenBank/DDBJ databases">
        <authorList>
            <consortium name="NIH - Mammalian Gene Collection (MGC) project"/>
        </authorList>
    </citation>
    <scope>NUCLEOTIDE SEQUENCE [LARGE SCALE MRNA]</scope>
    <source>
        <strain>Hereford</strain>
        <tissue>Heart ventricle</tissue>
    </source>
</reference>
<organism>
    <name type="scientific">Bos taurus</name>
    <name type="common">Bovine</name>
    <dbReference type="NCBI Taxonomy" id="9913"/>
    <lineage>
        <taxon>Eukaryota</taxon>
        <taxon>Metazoa</taxon>
        <taxon>Chordata</taxon>
        <taxon>Craniata</taxon>
        <taxon>Vertebrata</taxon>
        <taxon>Euteleostomi</taxon>
        <taxon>Mammalia</taxon>
        <taxon>Eutheria</taxon>
        <taxon>Laurasiatheria</taxon>
        <taxon>Artiodactyla</taxon>
        <taxon>Ruminantia</taxon>
        <taxon>Pecora</taxon>
        <taxon>Bovidae</taxon>
        <taxon>Bovinae</taxon>
        <taxon>Bos</taxon>
    </lineage>
</organism>
<feature type="chain" id="PRO_0000244610" description="Small nuclear ribonucleoprotein Sm D1">
    <location>
        <begin position="1"/>
        <end position="119"/>
    </location>
</feature>
<feature type="domain" description="Sm" evidence="3">
    <location>
        <begin position="2"/>
        <end position="74"/>
    </location>
</feature>
<feature type="region of interest" description="Sufficient for interaction with CLNS1A" evidence="1">
    <location>
        <begin position="1"/>
        <end position="80"/>
    </location>
</feature>
<feature type="region of interest" description="Required for interaction with SMN1" evidence="2">
    <location>
        <begin position="69"/>
        <end position="119"/>
    </location>
</feature>
<feature type="region of interest" description="Disordered" evidence="4">
    <location>
        <begin position="88"/>
        <end position="119"/>
    </location>
</feature>
<feature type="compositionally biased region" description="Basic residues" evidence="4">
    <location>
        <begin position="99"/>
        <end position="119"/>
    </location>
</feature>
<feature type="cross-link" description="Glycyl lysine isopeptide (Lys-Gly) (interchain with G-Cter in SUMO2)" evidence="2">
    <location>
        <position position="86"/>
    </location>
</feature>
<accession>Q3ZC10</accession>
<name>SMD1_BOVIN</name>
<evidence type="ECO:0000250" key="1"/>
<evidence type="ECO:0000250" key="2">
    <source>
        <dbReference type="UniProtKB" id="P62314"/>
    </source>
</evidence>
<evidence type="ECO:0000255" key="3">
    <source>
        <dbReference type="PROSITE-ProRule" id="PRU01346"/>
    </source>
</evidence>
<evidence type="ECO:0000256" key="4">
    <source>
        <dbReference type="SAM" id="MobiDB-lite"/>
    </source>
</evidence>
<evidence type="ECO:0000305" key="5"/>
<protein>
    <recommendedName>
        <fullName>Small nuclear ribonucleoprotein Sm D1</fullName>
        <shortName>Sm-D1</shortName>
    </recommendedName>
    <alternativeName>
        <fullName>snRNP core protein D1</fullName>
    </alternativeName>
</protein>
<sequence length="119" mass="13282">MKLVRFLMKLSHETVTIELKNGTQVHGTITGVDVSMNTHLKAVKMTLKNREPVQLETLSIRGNNIRYFILPDSLPLDTLLVDVEPKVKSKKREAVAGRGRGRGRGRGRGRGRGRGGPRR</sequence>
<gene>
    <name type="primary">SNRPD1</name>
</gene>